<gene>
    <name evidence="1" type="primary">argP</name>
    <name type="synonym">iciA</name>
    <name type="ordered locus">SNSL254_A3302</name>
</gene>
<name>ARGP_SALNS</name>
<dbReference type="EMBL" id="CP001113">
    <property type="protein sequence ID" value="ACF61858.1"/>
    <property type="molecule type" value="Genomic_DNA"/>
</dbReference>
<dbReference type="RefSeq" id="WP_000828345.1">
    <property type="nucleotide sequence ID" value="NZ_CCMR01000001.1"/>
</dbReference>
<dbReference type="SMR" id="B4T5G4"/>
<dbReference type="GeneID" id="66757362"/>
<dbReference type="KEGG" id="see:SNSL254_A3302"/>
<dbReference type="HOGENOM" id="CLU_063829_0_0_6"/>
<dbReference type="Proteomes" id="UP000008824">
    <property type="component" value="Chromosome"/>
</dbReference>
<dbReference type="GO" id="GO:0003677">
    <property type="term" value="F:DNA binding"/>
    <property type="evidence" value="ECO:0007669"/>
    <property type="project" value="UniProtKB-UniRule"/>
</dbReference>
<dbReference type="GO" id="GO:0003700">
    <property type="term" value="F:DNA-binding transcription factor activity"/>
    <property type="evidence" value="ECO:0007669"/>
    <property type="project" value="UniProtKB-UniRule"/>
</dbReference>
<dbReference type="CDD" id="cd08428">
    <property type="entry name" value="PBP2_IciA_ArgP"/>
    <property type="match status" value="1"/>
</dbReference>
<dbReference type="FunFam" id="1.10.10.10:FF:000061">
    <property type="entry name" value="HTH-type transcriptional regulator ArgP"/>
    <property type="match status" value="1"/>
</dbReference>
<dbReference type="FunFam" id="3.40.190.290:FF:000002">
    <property type="entry name" value="HTH-type transcriptional regulator ArgP"/>
    <property type="match status" value="1"/>
</dbReference>
<dbReference type="Gene3D" id="3.40.190.290">
    <property type="match status" value="1"/>
</dbReference>
<dbReference type="Gene3D" id="1.10.10.10">
    <property type="entry name" value="Winged helix-like DNA-binding domain superfamily/Winged helix DNA-binding domain"/>
    <property type="match status" value="1"/>
</dbReference>
<dbReference type="HAMAP" id="MF_00513">
    <property type="entry name" value="HTH_type_ArgP"/>
    <property type="match status" value="1"/>
</dbReference>
<dbReference type="InterPro" id="IPR017685">
    <property type="entry name" value="ArgP"/>
</dbReference>
<dbReference type="InterPro" id="IPR023490">
    <property type="entry name" value="ArgP_gammaproteobact"/>
</dbReference>
<dbReference type="InterPro" id="IPR050176">
    <property type="entry name" value="LTTR"/>
</dbReference>
<dbReference type="InterPro" id="IPR005119">
    <property type="entry name" value="LysR_subst-bd"/>
</dbReference>
<dbReference type="InterPro" id="IPR000847">
    <property type="entry name" value="Tscrpt_reg_HTH_LysR"/>
</dbReference>
<dbReference type="InterPro" id="IPR036388">
    <property type="entry name" value="WH-like_DNA-bd_sf"/>
</dbReference>
<dbReference type="InterPro" id="IPR036390">
    <property type="entry name" value="WH_DNA-bd_sf"/>
</dbReference>
<dbReference type="NCBIfam" id="TIGR03298">
    <property type="entry name" value="argP"/>
    <property type="match status" value="1"/>
</dbReference>
<dbReference type="NCBIfam" id="NF002964">
    <property type="entry name" value="PRK03635.1"/>
    <property type="match status" value="1"/>
</dbReference>
<dbReference type="NCBIfam" id="NF009888">
    <property type="entry name" value="PRK13348.1"/>
    <property type="match status" value="1"/>
</dbReference>
<dbReference type="PANTHER" id="PTHR30579:SF2">
    <property type="entry name" value="HTH-TYPE TRANSCRIPTIONAL REGULATOR ARGP"/>
    <property type="match status" value="1"/>
</dbReference>
<dbReference type="PANTHER" id="PTHR30579">
    <property type="entry name" value="TRANSCRIPTIONAL REGULATOR"/>
    <property type="match status" value="1"/>
</dbReference>
<dbReference type="Pfam" id="PF00126">
    <property type="entry name" value="HTH_1"/>
    <property type="match status" value="1"/>
</dbReference>
<dbReference type="Pfam" id="PF03466">
    <property type="entry name" value="LysR_substrate"/>
    <property type="match status" value="1"/>
</dbReference>
<dbReference type="PRINTS" id="PR00039">
    <property type="entry name" value="HTHLYSR"/>
</dbReference>
<dbReference type="SUPFAM" id="SSF53850">
    <property type="entry name" value="Periplasmic binding protein-like II"/>
    <property type="match status" value="1"/>
</dbReference>
<dbReference type="SUPFAM" id="SSF46785">
    <property type="entry name" value="Winged helix' DNA-binding domain"/>
    <property type="match status" value="1"/>
</dbReference>
<dbReference type="PROSITE" id="PS50931">
    <property type="entry name" value="HTH_LYSR"/>
    <property type="match status" value="1"/>
</dbReference>
<feature type="chain" id="PRO_1000127283" description="HTH-type transcriptional regulator ArgP">
    <location>
        <begin position="1"/>
        <end position="297"/>
    </location>
</feature>
<feature type="domain" description="HTH lysR-type" evidence="1">
    <location>
        <begin position="4"/>
        <end position="60"/>
    </location>
</feature>
<feature type="DNA-binding region" description="H-T-H motif" evidence="1">
    <location>
        <begin position="21"/>
        <end position="40"/>
    </location>
</feature>
<accession>B4T5G4</accession>
<sequence>MKRPDYRTLQALDAVIRERGFERAAQKLCITQSAVSQRIKQLENMFGQPLLVRTVPPRPTEQGQKLLALLRQVELLEEEWLGDEQTGSTPLLLSLAVNADSLATWLLPALAPVLADSPIRLNLQVEDETRTQERLRRGEVVGAVSIQHQALPSCLVDKLGALDYLFVASKPFAERYFPNGVTRSSLLKAPAVAFDHLDDMHQAFLQQNFDLPPGSVPCHIVNSSEAFVQLARQGTTCCMIPHLQIEKELESGELINLTPGLLQRRMLYWHRFAPESRMMRKVTDALLEYGHKVLRQD</sequence>
<evidence type="ECO:0000255" key="1">
    <source>
        <dbReference type="HAMAP-Rule" id="MF_00513"/>
    </source>
</evidence>
<evidence type="ECO:0000305" key="2"/>
<comment type="function">
    <text evidence="1">Controls the transcription of genes involved in arginine and lysine metabolism.</text>
</comment>
<comment type="subunit">
    <text evidence="1">Homodimer.</text>
</comment>
<comment type="similarity">
    <text evidence="2">Belongs to the LysR transcriptional regulatory family.</text>
</comment>
<reference key="1">
    <citation type="journal article" date="2011" name="J. Bacteriol.">
        <title>Comparative genomics of 28 Salmonella enterica isolates: evidence for CRISPR-mediated adaptive sublineage evolution.</title>
        <authorList>
            <person name="Fricke W.F."/>
            <person name="Mammel M.K."/>
            <person name="McDermott P.F."/>
            <person name="Tartera C."/>
            <person name="White D.G."/>
            <person name="Leclerc J.E."/>
            <person name="Ravel J."/>
            <person name="Cebula T.A."/>
        </authorList>
    </citation>
    <scope>NUCLEOTIDE SEQUENCE [LARGE SCALE GENOMIC DNA]</scope>
    <source>
        <strain>SL254</strain>
    </source>
</reference>
<organism>
    <name type="scientific">Salmonella newport (strain SL254)</name>
    <dbReference type="NCBI Taxonomy" id="423368"/>
    <lineage>
        <taxon>Bacteria</taxon>
        <taxon>Pseudomonadati</taxon>
        <taxon>Pseudomonadota</taxon>
        <taxon>Gammaproteobacteria</taxon>
        <taxon>Enterobacterales</taxon>
        <taxon>Enterobacteriaceae</taxon>
        <taxon>Salmonella</taxon>
    </lineage>
</organism>
<proteinExistence type="inferred from homology"/>
<keyword id="KW-0238">DNA-binding</keyword>
<keyword id="KW-0804">Transcription</keyword>
<keyword id="KW-0805">Transcription regulation</keyword>
<protein>
    <recommendedName>
        <fullName evidence="1">HTH-type transcriptional regulator ArgP</fullName>
    </recommendedName>
</protein>